<name>O16G_PARTM</name>
<dbReference type="EC" id="3.2.1.10"/>
<dbReference type="EMBL" id="D10487">
    <property type="protein sequence ID" value="BAA01368.1"/>
    <property type="molecule type" value="Genomic_DNA"/>
</dbReference>
<dbReference type="PIR" id="A41707">
    <property type="entry name" value="A41707"/>
</dbReference>
<dbReference type="SMR" id="P29094"/>
<dbReference type="STRING" id="1426.AOT13_06350"/>
<dbReference type="CAZy" id="GH13">
    <property type="family name" value="Glycoside Hydrolase Family 13"/>
</dbReference>
<dbReference type="eggNOG" id="COG0366">
    <property type="taxonomic scope" value="Bacteria"/>
</dbReference>
<dbReference type="GO" id="GO:0005737">
    <property type="term" value="C:cytoplasm"/>
    <property type="evidence" value="ECO:0007669"/>
    <property type="project" value="UniProtKB-SubCell"/>
</dbReference>
<dbReference type="GO" id="GO:0004556">
    <property type="term" value="F:alpha-amylase activity"/>
    <property type="evidence" value="ECO:0007669"/>
    <property type="project" value="TreeGrafter"/>
</dbReference>
<dbReference type="GO" id="GO:0046872">
    <property type="term" value="F:metal ion binding"/>
    <property type="evidence" value="ECO:0007669"/>
    <property type="project" value="UniProtKB-KW"/>
</dbReference>
<dbReference type="GO" id="GO:0004574">
    <property type="term" value="F:oligo-1,6-glucosidase activity"/>
    <property type="evidence" value="ECO:0007669"/>
    <property type="project" value="UniProtKB-EC"/>
</dbReference>
<dbReference type="GO" id="GO:0009313">
    <property type="term" value="P:oligosaccharide catabolic process"/>
    <property type="evidence" value="ECO:0007669"/>
    <property type="project" value="TreeGrafter"/>
</dbReference>
<dbReference type="CDD" id="cd11333">
    <property type="entry name" value="AmyAc_SI_OligoGlu_DGase"/>
    <property type="match status" value="1"/>
</dbReference>
<dbReference type="FunFam" id="3.20.20.80:FF:000014">
    <property type="entry name" value="Alpha,alpha-phosphotrehalase"/>
    <property type="match status" value="1"/>
</dbReference>
<dbReference type="FunFam" id="3.20.20.80:FF:000064">
    <property type="entry name" value="Oligo-1,6-glucosidase"/>
    <property type="match status" value="1"/>
</dbReference>
<dbReference type="FunFam" id="2.60.40.1180:FF:000007">
    <property type="entry name" value="Sucrose isomerase"/>
    <property type="match status" value="1"/>
</dbReference>
<dbReference type="FunFam" id="3.90.400.10:FF:000002">
    <property type="entry name" value="Sucrose isomerase"/>
    <property type="match status" value="1"/>
</dbReference>
<dbReference type="Gene3D" id="3.20.20.80">
    <property type="entry name" value="Glycosidases"/>
    <property type="match status" value="1"/>
</dbReference>
<dbReference type="Gene3D" id="2.60.40.1180">
    <property type="entry name" value="Golgi alpha-mannosidase II"/>
    <property type="match status" value="1"/>
</dbReference>
<dbReference type="Gene3D" id="3.90.400.10">
    <property type="entry name" value="Oligo-1,6-glucosidase, Domain 2"/>
    <property type="match status" value="1"/>
</dbReference>
<dbReference type="InterPro" id="IPR006047">
    <property type="entry name" value="Glyco_hydro_13_cat_dom"/>
</dbReference>
<dbReference type="InterPro" id="IPR013780">
    <property type="entry name" value="Glyco_hydro_b"/>
</dbReference>
<dbReference type="InterPro" id="IPR017853">
    <property type="entry name" value="Glycoside_hydrolase_SF"/>
</dbReference>
<dbReference type="InterPro" id="IPR045857">
    <property type="entry name" value="O16G_dom_2"/>
</dbReference>
<dbReference type="InterPro" id="IPR056300">
    <property type="entry name" value="SusG-like_C"/>
</dbReference>
<dbReference type="NCBIfam" id="NF008183">
    <property type="entry name" value="PRK10933.1"/>
    <property type="match status" value="1"/>
</dbReference>
<dbReference type="PANTHER" id="PTHR10357">
    <property type="entry name" value="ALPHA-AMYLASE FAMILY MEMBER"/>
    <property type="match status" value="1"/>
</dbReference>
<dbReference type="PANTHER" id="PTHR10357:SF184">
    <property type="entry name" value="OLIGO-1,6-GLUCOSIDASE 1"/>
    <property type="match status" value="1"/>
</dbReference>
<dbReference type="Pfam" id="PF00128">
    <property type="entry name" value="Alpha-amylase"/>
    <property type="match status" value="1"/>
</dbReference>
<dbReference type="Pfam" id="PF23915">
    <property type="entry name" value="SusG_C"/>
    <property type="match status" value="1"/>
</dbReference>
<dbReference type="SMART" id="SM00642">
    <property type="entry name" value="Aamy"/>
    <property type="match status" value="1"/>
</dbReference>
<dbReference type="SUPFAM" id="SSF51445">
    <property type="entry name" value="(Trans)glycosidases"/>
    <property type="match status" value="1"/>
</dbReference>
<dbReference type="SUPFAM" id="SSF51011">
    <property type="entry name" value="Glycosyl hydrolase domain"/>
    <property type="match status" value="1"/>
</dbReference>
<sequence length="562" mass="66505">MERVWWKEAVVYQIYPRSFYDSNGDGIGDIRGIIAKLDYLKELGVDVVWLSPVYKSPNDDNGYDISDYRDIMDEFGTMADWKTMLEEMHKRGIKLVMDLVVNHTSDEHPWFIESRKSKDNPYRDYYIWRPGKNGKEPNNWESVFSGSAWEYDEMTGEYYLHLFSKKQPDLNWENPKVRREVYEMMKFWLDKGVDGFRMDVINMISKVPELPDGEPQSGKKYASGSRYYMNGPRVHEFLQEMNREVLSKYDIMTVGETPGVTPKEGILYTDPSRRELNMVFQFEHMDLDSGPGGKWDIRPWSLADLKKTMTKWQKELEGKGWNSLYLNNHDQPRAVSRFGDDGKYRVESAKMLATFLHMMQGTPYIYQGEEIGMTNVRFPSIEDYRDIETLNMYKERVEEYGEDPQEVMEKIYYKGRDNARTPMQWDDSENAGFTAGTPWIPVNPNYKEINVKAALEDPNSVFHYYKKLIQLRKQHDIIVYGTYDLILEDDPYIYRYTRTLGNEQLIVITNFSEKTPVFRLPDHIIYKTKELLISNYDVDEAEELKEIRLRPWEARVYKIRLP</sequence>
<accession>P29094</accession>
<reference key="1">
    <citation type="journal article" date="1991" name="J. Biol. Chem.">
        <title>Proline residues responsible for thermostability occur with high frequency in the loop regions of an extremely thermostable oligo-1,6-glucosidase from Bacillus thermoglucosidasius KP1006.</title>
        <authorList>
            <person name="Watanabe K."/>
            <person name="Chishiro K."/>
            <person name="Kitamura K."/>
            <person name="Suzuki Y."/>
        </authorList>
    </citation>
    <scope>NUCLEOTIDE SEQUENCE [GENOMIC DNA]</scope>
    <scope>PROTEIN SEQUENCE OF 1-12</scope>
    <scope>TEMPERATURE DEPENDENCE</scope>
    <source>
        <strain>ATCC 43742 / DSM 2542 / NCIMB 11955 / NRRL B-14516 / KP 1006</strain>
    </source>
</reference>
<comment type="catalytic activity">
    <reaction>
        <text>Hydrolysis of (1-&gt;6)-alpha-D-glucosidic linkages in some oligosaccharides produced from starch and glycogen by alpha-amylase, and in isomaltose.</text>
        <dbReference type="EC" id="3.2.1.10"/>
    </reaction>
</comment>
<comment type="biophysicochemical properties">
    <temperatureDependence>
        <text evidence="3">Extremely thermostable.</text>
    </temperatureDependence>
</comment>
<comment type="subcellular location">
    <subcellularLocation>
        <location>Cytoplasm</location>
    </subcellularLocation>
</comment>
<comment type="similarity">
    <text evidence="4">Belongs to the glycosyl hydrolase 13 family.</text>
</comment>
<organism>
    <name type="scientific">Parageobacillus thermoglucosidasius</name>
    <name type="common">Geobacillus thermoglucosidasius</name>
    <dbReference type="NCBI Taxonomy" id="1426"/>
    <lineage>
        <taxon>Bacteria</taxon>
        <taxon>Bacillati</taxon>
        <taxon>Bacillota</taxon>
        <taxon>Bacilli</taxon>
        <taxon>Bacillales</taxon>
        <taxon>Anoxybacillaceae</taxon>
        <taxon>Parageobacillus</taxon>
    </lineage>
</organism>
<gene>
    <name type="primary">malL</name>
</gene>
<protein>
    <recommendedName>
        <fullName>Oligo-1,6-glucosidase</fullName>
        <ecNumber>3.2.1.10</ecNumber>
    </recommendedName>
    <alternativeName>
        <fullName>Dextrin 6-alpha-D-glucanohydrolase</fullName>
    </alternativeName>
    <alternativeName>
        <fullName>Oligosaccharide alpha-1,6-glucosidase</fullName>
    </alternativeName>
    <alternativeName>
        <fullName>Sucrase-isomaltase</fullName>
        <shortName>Isomaltase</shortName>
    </alternativeName>
</protein>
<evidence type="ECO:0000250" key="1"/>
<evidence type="ECO:0000250" key="2">
    <source>
        <dbReference type="UniProtKB" id="O06994"/>
    </source>
</evidence>
<evidence type="ECO:0000269" key="3">
    <source>
    </source>
</evidence>
<evidence type="ECO:0000305" key="4"/>
<keyword id="KW-0106">Calcium</keyword>
<keyword id="KW-0963">Cytoplasm</keyword>
<keyword id="KW-0903">Direct protein sequencing</keyword>
<keyword id="KW-0326">Glycosidase</keyword>
<keyword id="KW-0378">Hydrolase</keyword>
<keyword id="KW-0479">Metal-binding</keyword>
<proteinExistence type="evidence at protein level"/>
<feature type="chain" id="PRO_0000054318" description="Oligo-1,6-glucosidase">
    <location>
        <begin position="1"/>
        <end position="562"/>
    </location>
</feature>
<feature type="active site" description="Nucleophile" evidence="1">
    <location>
        <position position="199"/>
    </location>
</feature>
<feature type="active site" description="Proton donor" evidence="1">
    <location>
        <position position="256"/>
    </location>
</feature>
<feature type="binding site" evidence="2">
    <location>
        <position position="21"/>
    </location>
    <ligand>
        <name>Ca(2+)</name>
        <dbReference type="ChEBI" id="CHEBI:29108"/>
    </ligand>
</feature>
<feature type="binding site" evidence="2">
    <location>
        <position position="23"/>
    </location>
    <ligand>
        <name>Ca(2+)</name>
        <dbReference type="ChEBI" id="CHEBI:29108"/>
    </ligand>
</feature>
<feature type="binding site" evidence="2">
    <location>
        <position position="25"/>
    </location>
    <ligand>
        <name>Ca(2+)</name>
        <dbReference type="ChEBI" id="CHEBI:29108"/>
    </ligand>
</feature>
<feature type="binding site" evidence="2">
    <location>
        <position position="29"/>
    </location>
    <ligand>
        <name>Ca(2+)</name>
        <dbReference type="ChEBI" id="CHEBI:29108"/>
    </ligand>
</feature>
<feature type="site" description="Transition state stabilizer" evidence="1">
    <location>
        <position position="330"/>
    </location>
</feature>